<evidence type="ECO:0000255" key="1">
    <source>
        <dbReference type="HAMAP-Rule" id="MF_01495"/>
    </source>
</evidence>
<dbReference type="EMBL" id="AY582139">
    <property type="protein sequence ID" value="AAT98534.1"/>
    <property type="molecule type" value="Genomic_DNA"/>
</dbReference>
<dbReference type="RefSeq" id="YP_086991.1">
    <property type="nucleotide sequence ID" value="NC_006290.1"/>
</dbReference>
<dbReference type="SMR" id="Q68RY1"/>
<dbReference type="GeneID" id="3021576"/>
<dbReference type="GO" id="GO:0009535">
    <property type="term" value="C:chloroplast thylakoid membrane"/>
    <property type="evidence" value="ECO:0007669"/>
    <property type="project" value="UniProtKB-SubCell"/>
</dbReference>
<dbReference type="GO" id="GO:0009523">
    <property type="term" value="C:photosystem II"/>
    <property type="evidence" value="ECO:0007669"/>
    <property type="project" value="UniProtKB-KW"/>
</dbReference>
<dbReference type="GO" id="GO:0016168">
    <property type="term" value="F:chlorophyll binding"/>
    <property type="evidence" value="ECO:0007669"/>
    <property type="project" value="UniProtKB-UniRule"/>
</dbReference>
<dbReference type="GO" id="GO:0045156">
    <property type="term" value="F:electron transporter, transferring electrons within the cyclic electron transport pathway of photosynthesis activity"/>
    <property type="evidence" value="ECO:0007669"/>
    <property type="project" value="InterPro"/>
</dbReference>
<dbReference type="GO" id="GO:0009772">
    <property type="term" value="P:photosynthetic electron transport in photosystem II"/>
    <property type="evidence" value="ECO:0007669"/>
    <property type="project" value="InterPro"/>
</dbReference>
<dbReference type="FunFam" id="3.10.680.10:FF:000001">
    <property type="entry name" value="Photosystem II CP47 reaction center protein"/>
    <property type="match status" value="1"/>
</dbReference>
<dbReference type="Gene3D" id="3.10.680.10">
    <property type="entry name" value="Photosystem II CP47 reaction center protein"/>
    <property type="match status" value="1"/>
</dbReference>
<dbReference type="HAMAP" id="MF_01495">
    <property type="entry name" value="PSII_PsbB_CP47"/>
    <property type="match status" value="1"/>
</dbReference>
<dbReference type="InterPro" id="IPR000932">
    <property type="entry name" value="PS_antenna-like"/>
</dbReference>
<dbReference type="InterPro" id="IPR036001">
    <property type="entry name" value="PS_II_antenna-like_sf"/>
</dbReference>
<dbReference type="InterPro" id="IPR017486">
    <property type="entry name" value="PSII_PsbB"/>
</dbReference>
<dbReference type="NCBIfam" id="TIGR03039">
    <property type="entry name" value="PS_II_CP47"/>
    <property type="match status" value="1"/>
</dbReference>
<dbReference type="PANTHER" id="PTHR33180">
    <property type="entry name" value="PHOTOSYSTEM II CP43 REACTION CENTER PROTEIN"/>
    <property type="match status" value="1"/>
</dbReference>
<dbReference type="PANTHER" id="PTHR33180:SF35">
    <property type="entry name" value="PHOTOSYSTEM II CP47 REACTION CENTER PROTEIN"/>
    <property type="match status" value="1"/>
</dbReference>
<dbReference type="Pfam" id="PF00421">
    <property type="entry name" value="PSII"/>
    <property type="match status" value="1"/>
</dbReference>
<dbReference type="SUPFAM" id="SSF161077">
    <property type="entry name" value="Photosystem II antenna protein-like"/>
    <property type="match status" value="1"/>
</dbReference>
<protein>
    <recommendedName>
        <fullName evidence="1">Photosystem II CP47 reaction center protein</fullName>
    </recommendedName>
    <alternativeName>
        <fullName evidence="1">PSII 47 kDa protein</fullName>
    </alternativeName>
    <alternativeName>
        <fullName evidence="1">Protein CP-47</fullName>
    </alternativeName>
</protein>
<accession>Q68RY1</accession>
<gene>
    <name evidence="1" type="primary">psbB</name>
    <name type="ORF">PSC0743</name>
</gene>
<keyword id="KW-0148">Chlorophyll</keyword>
<keyword id="KW-0150">Chloroplast</keyword>
<keyword id="KW-0157">Chromophore</keyword>
<keyword id="KW-0472">Membrane</keyword>
<keyword id="KW-0602">Photosynthesis</keyword>
<keyword id="KW-0604">Photosystem II</keyword>
<keyword id="KW-0934">Plastid</keyword>
<keyword id="KW-0793">Thylakoid</keyword>
<keyword id="KW-0812">Transmembrane</keyword>
<keyword id="KW-1133">Transmembrane helix</keyword>
<comment type="function">
    <text evidence="1">One of the components of the core complex of photosystem II (PSII). It binds chlorophyll and helps catalyze the primary light-induced photochemical processes of PSII. PSII is a light-driven water:plastoquinone oxidoreductase, using light energy to abstract electrons from H(2)O, generating O(2) and a proton gradient subsequently used for ATP formation.</text>
</comment>
<comment type="cofactor">
    <text evidence="1">Binds multiple chlorophylls. PSII binds additional chlorophylls, carotenoids and specific lipids.</text>
</comment>
<comment type="subunit">
    <text evidence="1">PSII is composed of 1 copy each of membrane proteins PsbA, PsbB, PsbC, PsbD, PsbE, PsbF, PsbH, PsbI, PsbJ, PsbK, PsbL, PsbM, PsbT, PsbX, PsbY, PsbZ, Psb30/Ycf12, at least 3 peripheral proteins of the oxygen-evolving complex and a large number of cofactors. It forms dimeric complexes.</text>
</comment>
<comment type="subcellular location">
    <subcellularLocation>
        <location evidence="1">Plastid</location>
        <location evidence="1">Chloroplast thylakoid membrane</location>
        <topology evidence="1">Multi-pass membrane protein</topology>
    </subcellularLocation>
</comment>
<comment type="similarity">
    <text evidence="1">Belongs to the PsbB/PsbC family. PsbB subfamily.</text>
</comment>
<reference key="1">
    <citation type="journal article" date="2004" name="DNA Res.">
        <title>Complete chloroplast genome sequence from Korea ginseng (Panax schinseng Nees) and comparative analysis of sequence evolution among 17 vascular plants.</title>
        <authorList>
            <person name="Kim K.-J."/>
            <person name="Lee H.-L."/>
        </authorList>
    </citation>
    <scope>NUCLEOTIDE SEQUENCE [LARGE SCALE GENOMIC DNA]</scope>
</reference>
<name>PSBB_PANGI</name>
<sequence>MGLPWYRVHTVVLNDPGRLLSVHIMHTALVAGWAGSMALYELAVFDPSDPVLDPMWRQGMFVIPFMTRLGITNSWGGWSVTGGAIPNPGIWSYEGVAGAHIVFSGLCFLAAIWHWVYWDLEIFSDERTGKPSLDLPKIFGIHLFLAGVACFGFGAFHVTGLYGPGIWVSDPYGLTGKVQSVNPAWGVEGFDPFVPGGIASHHIAAGTLGILAGLFHLSVRPPQRLYKGLRMGNIETVLSSSIAAVFFAAFVVAGTMWYGSATTPIELFGPTRYQWDQGYFQQEIYRRVSAGLAENQSLSEAWSKIPEKLAFYDYIGNNPAKGGLFRAGSMDNGDGIAVGWLGHPIFRDKEGRELFVRRMPTFFETFPVVLVDGDGIVRADVPFRRAESKYSVEQVGVTVEFYGGELNGVSYSDPATVKKYARRAQLGEIFELDRATLKSDGVFRSSPRGWFTFGHASFALLFFFGHIWHGARTLFRDVFAGIDPDLDAQVEFGAFQKLGDPTTRRQVV</sequence>
<proteinExistence type="inferred from homology"/>
<feature type="chain" id="PRO_0000359851" description="Photosystem II CP47 reaction center protein">
    <location>
        <begin position="1"/>
        <end position="508"/>
    </location>
</feature>
<feature type="transmembrane region" description="Helical" evidence="1">
    <location>
        <begin position="21"/>
        <end position="36"/>
    </location>
</feature>
<feature type="transmembrane region" description="Helical" evidence="1">
    <location>
        <begin position="101"/>
        <end position="115"/>
    </location>
</feature>
<feature type="transmembrane region" description="Helical" evidence="1">
    <location>
        <begin position="140"/>
        <end position="156"/>
    </location>
</feature>
<feature type="transmembrane region" description="Helical" evidence="1">
    <location>
        <begin position="203"/>
        <end position="218"/>
    </location>
</feature>
<feature type="transmembrane region" description="Helical" evidence="1">
    <location>
        <begin position="237"/>
        <end position="252"/>
    </location>
</feature>
<feature type="transmembrane region" description="Helical" evidence="1">
    <location>
        <begin position="457"/>
        <end position="472"/>
    </location>
</feature>
<geneLocation type="chloroplast"/>
<organism>
    <name type="scientific">Panax ginseng</name>
    <name type="common">Korean ginseng</name>
    <dbReference type="NCBI Taxonomy" id="4054"/>
    <lineage>
        <taxon>Eukaryota</taxon>
        <taxon>Viridiplantae</taxon>
        <taxon>Streptophyta</taxon>
        <taxon>Embryophyta</taxon>
        <taxon>Tracheophyta</taxon>
        <taxon>Spermatophyta</taxon>
        <taxon>Magnoliopsida</taxon>
        <taxon>eudicotyledons</taxon>
        <taxon>Gunneridae</taxon>
        <taxon>Pentapetalae</taxon>
        <taxon>asterids</taxon>
        <taxon>campanulids</taxon>
        <taxon>Apiales</taxon>
        <taxon>Araliaceae</taxon>
        <taxon>Panax</taxon>
    </lineage>
</organism>